<proteinExistence type="inferred from homology"/>
<sequence length="379" mass="42657">MTNIRKSHPLMKIVNNAFIDLPTPSNISSWWNFGSLLGICLILQILTGLFLAMHYTSDTTTAFSSVVHICRDVNYGWVIRYLHANGASMFFICLFIHVGRGLYYGSYMFLETWNIGVILLLTVMATAFMGYVLPWGQMSFWGATVITNLLSAIPYIGTNLVEWVWGGFSVDKATLTRFFAFHFILPFIIAALATVHLLFLHETGSNNPTGISSDMDKIPFHPYYTIKDILGALFMILALLTLVLFSPDLLGDPDNYTPANPLNTPPHIKPEWYFLFAYAILRSIPNKLGGVLALAASILILILMPKLHTSKQRSMMFRPLSQCLFWVLVADLITLTWIGGQPVEHPFIIIGQLASILYFLIILVLMPITSIIENDLLKW</sequence>
<geneLocation type="mitochondrion"/>
<comment type="function">
    <text evidence="2">Component of the ubiquinol-cytochrome c reductase complex (complex III or cytochrome b-c1 complex) that is part of the mitochondrial respiratory chain. The b-c1 complex mediates electron transfer from ubiquinol to cytochrome c. Contributes to the generation of a proton gradient across the mitochondrial membrane that is then used for ATP synthesis.</text>
</comment>
<comment type="cofactor">
    <cofactor evidence="2">
        <name>heme b</name>
        <dbReference type="ChEBI" id="CHEBI:60344"/>
    </cofactor>
    <text evidence="2">Binds 2 heme b groups non-covalently.</text>
</comment>
<comment type="subunit">
    <text evidence="2">The cytochrome bc1 complex contains 11 subunits: 3 respiratory subunits (MT-CYB, CYC1 and UQCRFS1), 2 core proteins (UQCRC1 and UQCRC2) and 6 low-molecular weight proteins (UQCRH/QCR6, UQCRB/QCR7, UQCRQ/QCR8, UQCR10/QCR9, UQCR11/QCR10 and a cleavage product of UQCRFS1). This cytochrome bc1 complex then forms a dimer.</text>
</comment>
<comment type="subcellular location">
    <subcellularLocation>
        <location evidence="2">Mitochondrion inner membrane</location>
        <topology evidence="2">Multi-pass membrane protein</topology>
    </subcellularLocation>
</comment>
<comment type="miscellaneous">
    <text evidence="1">Heme 1 (or BL or b562) is low-potential and absorbs at about 562 nm, and heme 2 (or BH or b566) is high-potential and absorbs at about 566 nm.</text>
</comment>
<comment type="similarity">
    <text evidence="3 4">Belongs to the cytochrome b family.</text>
</comment>
<comment type="caution">
    <text evidence="2">The full-length protein contains only eight transmembrane helices, not nine as predicted by bioinformatics tools.</text>
</comment>
<accession>Q8M708</accession>
<reference key="1">
    <citation type="submission" date="2001-05" db="EMBL/GenBank/DDBJ databases">
        <title>Evidence of two genetically deeply divergent species of warthog, Phacochoerus africanus and P. aethiopicus (Artiodactyla: Suiformes) in East Africa.</title>
        <authorList>
            <person name="Randi E."/>
            <person name="d'Huart J.P."/>
            <person name="Lucchini V."/>
            <person name="Aman R."/>
        </authorList>
    </citation>
    <scope>NUCLEOTIDE SEQUENCE [GENOMIC DNA]</scope>
    <source>
        <strain>Isolate Paet3</strain>
    </source>
</reference>
<dbReference type="EMBL" id="AJ314550">
    <property type="protein sequence ID" value="CAC85251.1"/>
    <property type="molecule type" value="Genomic_DNA"/>
</dbReference>
<dbReference type="SMR" id="Q8M708"/>
<dbReference type="GO" id="GO:0005743">
    <property type="term" value="C:mitochondrial inner membrane"/>
    <property type="evidence" value="ECO:0007669"/>
    <property type="project" value="UniProtKB-SubCell"/>
</dbReference>
<dbReference type="GO" id="GO:0045275">
    <property type="term" value="C:respiratory chain complex III"/>
    <property type="evidence" value="ECO:0007669"/>
    <property type="project" value="InterPro"/>
</dbReference>
<dbReference type="GO" id="GO:0046872">
    <property type="term" value="F:metal ion binding"/>
    <property type="evidence" value="ECO:0007669"/>
    <property type="project" value="UniProtKB-KW"/>
</dbReference>
<dbReference type="GO" id="GO:0008121">
    <property type="term" value="F:ubiquinol-cytochrome-c reductase activity"/>
    <property type="evidence" value="ECO:0007669"/>
    <property type="project" value="InterPro"/>
</dbReference>
<dbReference type="GO" id="GO:0006122">
    <property type="term" value="P:mitochondrial electron transport, ubiquinol to cytochrome c"/>
    <property type="evidence" value="ECO:0007669"/>
    <property type="project" value="TreeGrafter"/>
</dbReference>
<dbReference type="CDD" id="cd00290">
    <property type="entry name" value="cytochrome_b_C"/>
    <property type="match status" value="1"/>
</dbReference>
<dbReference type="CDD" id="cd00284">
    <property type="entry name" value="Cytochrome_b_N"/>
    <property type="match status" value="1"/>
</dbReference>
<dbReference type="FunFam" id="1.20.810.10:FF:000002">
    <property type="entry name" value="Cytochrome b"/>
    <property type="match status" value="1"/>
</dbReference>
<dbReference type="Gene3D" id="1.20.810.10">
    <property type="entry name" value="Cytochrome Bc1 Complex, Chain C"/>
    <property type="match status" value="1"/>
</dbReference>
<dbReference type="InterPro" id="IPR005798">
    <property type="entry name" value="Cyt_b/b6_C"/>
</dbReference>
<dbReference type="InterPro" id="IPR036150">
    <property type="entry name" value="Cyt_b/b6_C_sf"/>
</dbReference>
<dbReference type="InterPro" id="IPR005797">
    <property type="entry name" value="Cyt_b/b6_N"/>
</dbReference>
<dbReference type="InterPro" id="IPR027387">
    <property type="entry name" value="Cytb/b6-like_sf"/>
</dbReference>
<dbReference type="InterPro" id="IPR030689">
    <property type="entry name" value="Cytochrome_b"/>
</dbReference>
<dbReference type="InterPro" id="IPR048260">
    <property type="entry name" value="Cytochrome_b_C_euk/bac"/>
</dbReference>
<dbReference type="InterPro" id="IPR048259">
    <property type="entry name" value="Cytochrome_b_N_euk/bac"/>
</dbReference>
<dbReference type="InterPro" id="IPR016174">
    <property type="entry name" value="Di-haem_cyt_TM"/>
</dbReference>
<dbReference type="PANTHER" id="PTHR19271">
    <property type="entry name" value="CYTOCHROME B"/>
    <property type="match status" value="1"/>
</dbReference>
<dbReference type="PANTHER" id="PTHR19271:SF16">
    <property type="entry name" value="CYTOCHROME B"/>
    <property type="match status" value="1"/>
</dbReference>
<dbReference type="Pfam" id="PF00032">
    <property type="entry name" value="Cytochrom_B_C"/>
    <property type="match status" value="1"/>
</dbReference>
<dbReference type="Pfam" id="PF00033">
    <property type="entry name" value="Cytochrome_B"/>
    <property type="match status" value="1"/>
</dbReference>
<dbReference type="PIRSF" id="PIRSF038885">
    <property type="entry name" value="COB"/>
    <property type="match status" value="1"/>
</dbReference>
<dbReference type="SUPFAM" id="SSF81648">
    <property type="entry name" value="a domain/subunit of cytochrome bc1 complex (Ubiquinol-cytochrome c reductase)"/>
    <property type="match status" value="1"/>
</dbReference>
<dbReference type="SUPFAM" id="SSF81342">
    <property type="entry name" value="Transmembrane di-heme cytochromes"/>
    <property type="match status" value="1"/>
</dbReference>
<dbReference type="PROSITE" id="PS51003">
    <property type="entry name" value="CYTB_CTER"/>
    <property type="match status" value="1"/>
</dbReference>
<dbReference type="PROSITE" id="PS51002">
    <property type="entry name" value="CYTB_NTER"/>
    <property type="match status" value="1"/>
</dbReference>
<evidence type="ECO:0000250" key="1"/>
<evidence type="ECO:0000250" key="2">
    <source>
        <dbReference type="UniProtKB" id="P00157"/>
    </source>
</evidence>
<evidence type="ECO:0000255" key="3">
    <source>
        <dbReference type="PROSITE-ProRule" id="PRU00967"/>
    </source>
</evidence>
<evidence type="ECO:0000255" key="4">
    <source>
        <dbReference type="PROSITE-ProRule" id="PRU00968"/>
    </source>
</evidence>
<organism>
    <name type="scientific">Phacochoerus aethiopicus</name>
    <name type="common">Warthog</name>
    <dbReference type="NCBI Taxonomy" id="85517"/>
    <lineage>
        <taxon>Eukaryota</taxon>
        <taxon>Metazoa</taxon>
        <taxon>Chordata</taxon>
        <taxon>Craniata</taxon>
        <taxon>Vertebrata</taxon>
        <taxon>Euteleostomi</taxon>
        <taxon>Mammalia</taxon>
        <taxon>Eutheria</taxon>
        <taxon>Laurasiatheria</taxon>
        <taxon>Artiodactyla</taxon>
        <taxon>Suina</taxon>
        <taxon>Suidae</taxon>
        <taxon>Phacochoerus</taxon>
    </lineage>
</organism>
<gene>
    <name type="primary">MT-CYB</name>
    <name type="synonym">COB</name>
    <name type="synonym">CYTB</name>
    <name type="synonym">MTCYB</name>
</gene>
<name>CYB_PHAAE</name>
<feature type="chain" id="PRO_0000061378" description="Cytochrome b">
    <location>
        <begin position="1"/>
        <end position="379"/>
    </location>
</feature>
<feature type="transmembrane region" description="Helical" evidence="2">
    <location>
        <begin position="33"/>
        <end position="53"/>
    </location>
</feature>
<feature type="transmembrane region" description="Helical" evidence="2">
    <location>
        <begin position="77"/>
        <end position="98"/>
    </location>
</feature>
<feature type="transmembrane region" description="Helical" evidence="2">
    <location>
        <begin position="113"/>
        <end position="133"/>
    </location>
</feature>
<feature type="transmembrane region" description="Helical" evidence="2">
    <location>
        <begin position="178"/>
        <end position="198"/>
    </location>
</feature>
<feature type="transmembrane region" description="Helical" evidence="2">
    <location>
        <begin position="226"/>
        <end position="246"/>
    </location>
</feature>
<feature type="transmembrane region" description="Helical" evidence="2">
    <location>
        <begin position="288"/>
        <end position="308"/>
    </location>
</feature>
<feature type="transmembrane region" description="Helical" evidence="2">
    <location>
        <begin position="320"/>
        <end position="340"/>
    </location>
</feature>
<feature type="transmembrane region" description="Helical" evidence="2">
    <location>
        <begin position="347"/>
        <end position="367"/>
    </location>
</feature>
<feature type="binding site" description="axial binding residue" evidence="2">
    <location>
        <position position="83"/>
    </location>
    <ligand>
        <name>heme b</name>
        <dbReference type="ChEBI" id="CHEBI:60344"/>
        <label>b562</label>
    </ligand>
    <ligandPart>
        <name>Fe</name>
        <dbReference type="ChEBI" id="CHEBI:18248"/>
    </ligandPart>
</feature>
<feature type="binding site" description="axial binding residue" evidence="2">
    <location>
        <position position="97"/>
    </location>
    <ligand>
        <name>heme b</name>
        <dbReference type="ChEBI" id="CHEBI:60344"/>
        <label>b566</label>
    </ligand>
    <ligandPart>
        <name>Fe</name>
        <dbReference type="ChEBI" id="CHEBI:18248"/>
    </ligandPart>
</feature>
<feature type="binding site" description="axial binding residue" evidence="2">
    <location>
        <position position="182"/>
    </location>
    <ligand>
        <name>heme b</name>
        <dbReference type="ChEBI" id="CHEBI:60344"/>
        <label>b562</label>
    </ligand>
    <ligandPart>
        <name>Fe</name>
        <dbReference type="ChEBI" id="CHEBI:18248"/>
    </ligandPart>
</feature>
<feature type="binding site" description="axial binding residue" evidence="2">
    <location>
        <position position="196"/>
    </location>
    <ligand>
        <name>heme b</name>
        <dbReference type="ChEBI" id="CHEBI:60344"/>
        <label>b566</label>
    </ligand>
    <ligandPart>
        <name>Fe</name>
        <dbReference type="ChEBI" id="CHEBI:18248"/>
    </ligandPart>
</feature>
<feature type="binding site" evidence="2">
    <location>
        <position position="201"/>
    </location>
    <ligand>
        <name>a ubiquinone</name>
        <dbReference type="ChEBI" id="CHEBI:16389"/>
    </ligand>
</feature>
<protein>
    <recommendedName>
        <fullName>Cytochrome b</fullName>
    </recommendedName>
    <alternativeName>
        <fullName>Complex III subunit 3</fullName>
    </alternativeName>
    <alternativeName>
        <fullName>Complex III subunit III</fullName>
    </alternativeName>
    <alternativeName>
        <fullName>Cytochrome b-c1 complex subunit 3</fullName>
    </alternativeName>
    <alternativeName>
        <fullName>Ubiquinol-cytochrome-c reductase complex cytochrome b subunit</fullName>
    </alternativeName>
</protein>
<keyword id="KW-0249">Electron transport</keyword>
<keyword id="KW-0349">Heme</keyword>
<keyword id="KW-0408">Iron</keyword>
<keyword id="KW-0472">Membrane</keyword>
<keyword id="KW-0479">Metal-binding</keyword>
<keyword id="KW-0496">Mitochondrion</keyword>
<keyword id="KW-0999">Mitochondrion inner membrane</keyword>
<keyword id="KW-0679">Respiratory chain</keyword>
<keyword id="KW-0812">Transmembrane</keyword>
<keyword id="KW-1133">Transmembrane helix</keyword>
<keyword id="KW-0813">Transport</keyword>
<keyword id="KW-0830">Ubiquinone</keyword>